<proteinExistence type="evidence at transcript level"/>
<organism>
    <name type="scientific">Danio rerio</name>
    <name type="common">Zebrafish</name>
    <name type="synonym">Brachydanio rerio</name>
    <dbReference type="NCBI Taxonomy" id="7955"/>
    <lineage>
        <taxon>Eukaryota</taxon>
        <taxon>Metazoa</taxon>
        <taxon>Chordata</taxon>
        <taxon>Craniata</taxon>
        <taxon>Vertebrata</taxon>
        <taxon>Euteleostomi</taxon>
        <taxon>Actinopterygii</taxon>
        <taxon>Neopterygii</taxon>
        <taxon>Teleostei</taxon>
        <taxon>Ostariophysi</taxon>
        <taxon>Cypriniformes</taxon>
        <taxon>Danionidae</taxon>
        <taxon>Danioninae</taxon>
        <taxon>Danio</taxon>
    </lineage>
</organism>
<comment type="function">
    <text evidence="1 2">Auxillary component of the N-terminal acetyltransferase C (NatC) complex which catalyzes acetylation of N-terminal methionine residues (By similarity). N-terminal acetylation protects proteins from ubiquitination and degradation by the N-end rule pathway (By similarity). Regulates cell proliferation during embryonic development (PubMed:16484612).</text>
</comment>
<comment type="subunit">
    <text evidence="4">Component of the N-terminal acetyltransferase C (NatC) complex (PubMed:16484612).</text>
</comment>
<comment type="subcellular location">
    <subcellularLocation>
        <location evidence="1">Cytoplasm</location>
    </subcellularLocation>
</comment>
<comment type="developmental stage">
    <text evidence="2">Expressed at high levels at 6 hpf. Expression levels remain high through 18 hpf and 28 hpf in many developing tissues suCh as vascular structures or epidermis. By 48 hpf, expression is restricted to the head. At 5 dpf, expression is restricted to epidermis.</text>
</comment>
<comment type="similarity">
    <text evidence="3">Belongs to the MAK10 family.</text>
</comment>
<comment type="caution">
    <text evidence="4">PubMed:16484612 decribes a naa35/zEgap-containing complex as evolutionary conserved NatC complex; however, the zMak3 protein investigated in this context corresponds to mammalian NAA50 and not NAA30 and its interaction with NAA35 is ambiguous (PubMed:16484612).</text>
</comment>
<protein>
    <recommendedName>
        <fullName>N-alpha-acetyltransferase 35, NatC auxiliary subunit</fullName>
    </recommendedName>
    <alternativeName>
        <fullName>Embryonic growth-associated protein</fullName>
        <shortName>zEGAP</shortName>
    </alternativeName>
    <alternativeName>
        <fullName>Protein MAK10 homolog</fullName>
    </alternativeName>
</protein>
<keyword id="KW-0963">Cytoplasm</keyword>
<keyword id="KW-0217">Developmental protein</keyword>
<keyword id="KW-1185">Reference proteome</keyword>
<feature type="chain" id="PRO_0000308620" description="N-alpha-acetyltransferase 35, NatC auxiliary subunit">
    <location>
        <begin position="1"/>
        <end position="724"/>
    </location>
</feature>
<sequence>MVMKSSVEEEEGGWGLGIPEKMRNNANWVDVTQEFKGACKELKLGELLHDKLFGLFEAMSAIEMMDPKMDAGMIGNQVNRKVLNFDQAVKDEAIRVKDLSIPELIGIMDTCFCCLITWLEGHSLAQTVFTCLYVHNPDLIQDPALKAFALGILKICDIAREKVNKAAVFEEEDFQAMTYGFKMANNVTDLRVTGMLKDVEDELQRKVKSTRSRQGEQRDPEVELDHQQCLALFSRVKFTRLLLSALISFTKKETSAVSEAQKLMSQAADLLPAVHATIQYGIQSQNDTTKGDHPIMMGFEPLVNQRLLPPTFPRYAKIIKREEMVNYFSKLIERIKSVCEVINITNLHSILDFFCEFSEQSPCVLSRSLLQTTFLIDNKKVFGTHLMQDMIKDALRCFVSPPVLSSKCSLNNNHQAKDYIDSFVTHCTRPFCSLIQIHGHNRARQRDKLGHILEEFATLQDEAEKVDAALHGLLMKLEPQRQHLACLGTWILYHNLRIMIQYLLSGFELELYSMHEYYYIYWYLSEFLYAWLMSTLSRADSSQMAEERILEEQLKVRSSKKSKKKKKARPLSKEITMSQAYQNMCAGMYKTMIALDMDRKVRKPQFELDSEQVRYEHRFAPFNSVVTPPPVHYIQFKEMSDLKKYNPPPRSADLYMAASKHFQQAKLLLENVTSPDAEVNRILKVAKPNIVVMKLLAGGHKKETKALPEFDFSAHKYFPIVKIL</sequence>
<dbReference type="EMBL" id="BC053286">
    <property type="protein sequence ID" value="AAH53286.1"/>
    <property type="molecule type" value="mRNA"/>
</dbReference>
<dbReference type="RefSeq" id="NP_955844.1">
    <property type="nucleotide sequence ID" value="NM_199550.1"/>
</dbReference>
<dbReference type="SMR" id="Q7T322"/>
<dbReference type="FunCoup" id="Q7T322">
    <property type="interactions" value="2406"/>
</dbReference>
<dbReference type="STRING" id="7955.ENSDARP00000089478"/>
<dbReference type="PaxDb" id="7955-ENSDARP00000089478"/>
<dbReference type="GeneID" id="321587"/>
<dbReference type="KEGG" id="dre:321587"/>
<dbReference type="AGR" id="ZFIN:ZDB-GENE-030131-306"/>
<dbReference type="CTD" id="60560"/>
<dbReference type="ZFIN" id="ZDB-GENE-030131-306">
    <property type="gene designation" value="naa35"/>
</dbReference>
<dbReference type="eggNOG" id="KOG2343">
    <property type="taxonomic scope" value="Eukaryota"/>
</dbReference>
<dbReference type="InParanoid" id="Q7T322"/>
<dbReference type="OrthoDB" id="269405at2759"/>
<dbReference type="PhylomeDB" id="Q7T322"/>
<dbReference type="BRENDA" id="2.3.1.256">
    <property type="organism ID" value="928"/>
</dbReference>
<dbReference type="PRO" id="PR:Q7T322"/>
<dbReference type="Proteomes" id="UP000000437">
    <property type="component" value="Chromosome 8"/>
</dbReference>
<dbReference type="GO" id="GO:0005737">
    <property type="term" value="C:cytoplasm"/>
    <property type="evidence" value="ECO:0000250"/>
    <property type="project" value="UniProtKB"/>
</dbReference>
<dbReference type="GO" id="GO:0031417">
    <property type="term" value="C:NatC complex"/>
    <property type="evidence" value="ECO:0000250"/>
    <property type="project" value="UniProtKB"/>
</dbReference>
<dbReference type="GO" id="GO:0048514">
    <property type="term" value="P:blood vessel morphogenesis"/>
    <property type="evidence" value="ECO:0000315"/>
    <property type="project" value="ZFIN"/>
</dbReference>
<dbReference type="GO" id="GO:0043066">
    <property type="term" value="P:negative regulation of apoptotic process"/>
    <property type="evidence" value="ECO:0000315"/>
    <property type="project" value="ZFIN"/>
</dbReference>
<dbReference type="GO" id="GO:0008284">
    <property type="term" value="P:positive regulation of cell population proliferation"/>
    <property type="evidence" value="ECO:0000315"/>
    <property type="project" value="ZFIN"/>
</dbReference>
<dbReference type="GO" id="GO:0032006">
    <property type="term" value="P:regulation of TOR signaling"/>
    <property type="evidence" value="ECO:0000315"/>
    <property type="project" value="ZFIN"/>
</dbReference>
<dbReference type="GO" id="GO:0048659">
    <property type="term" value="P:smooth muscle cell proliferation"/>
    <property type="evidence" value="ECO:0000250"/>
    <property type="project" value="UniProtKB"/>
</dbReference>
<dbReference type="GO" id="GO:0001756">
    <property type="term" value="P:somitogenesis"/>
    <property type="evidence" value="ECO:0000315"/>
    <property type="project" value="ZFIN"/>
</dbReference>
<dbReference type="InterPro" id="IPR007244">
    <property type="entry name" value="Naa35/Mak10"/>
</dbReference>
<dbReference type="PANTHER" id="PTHR21373">
    <property type="entry name" value="GLUCOSE REPRESSIBLE PROTEIN MAK10"/>
    <property type="match status" value="1"/>
</dbReference>
<dbReference type="PANTHER" id="PTHR21373:SF0">
    <property type="entry name" value="N-ALPHA-ACETYLTRANSFERASE 35, NATC AUXILIARY SUBUNIT"/>
    <property type="match status" value="1"/>
</dbReference>
<dbReference type="Pfam" id="PF04112">
    <property type="entry name" value="Mak10"/>
    <property type="match status" value="2"/>
</dbReference>
<evidence type="ECO:0000250" key="1">
    <source>
        <dbReference type="UniProtKB" id="Q5VZE5"/>
    </source>
</evidence>
<evidence type="ECO:0000269" key="2">
    <source>
    </source>
</evidence>
<evidence type="ECO:0000305" key="3"/>
<evidence type="ECO:0000305" key="4">
    <source>
    </source>
</evidence>
<gene>
    <name type="primary">naa35</name>
    <name type="synonym">egap</name>
    <name type="synonym">mak10</name>
</gene>
<name>NAA35_DANRE</name>
<accession>Q7T322</accession>
<reference key="1">
    <citation type="submission" date="2003-06" db="EMBL/GenBank/DDBJ databases">
        <authorList>
            <consortium name="NIH - Zebrafish Gene Collection (ZGC) project"/>
        </authorList>
    </citation>
    <scope>NUCLEOTIDE SEQUENCE [LARGE SCALE MRNA]</scope>
    <source>
        <tissue>Kidney</tissue>
    </source>
</reference>
<reference key="2">
    <citation type="journal article" date="2006" name="Circ. Res.">
        <title>Embryonic growth-associated protein is one subunit of a novel N-terminal acetyltransferase complex essential for embryonic vascular development.</title>
        <authorList>
            <person name="Wenzlau J.M."/>
            <person name="Garl P.J."/>
            <person name="Simpson P."/>
            <person name="Stenmark K.R."/>
            <person name="West J."/>
            <person name="Artinger K.B."/>
            <person name="Nemenoff R.A."/>
            <person name="Weiser-Evans M.C.M."/>
        </authorList>
    </citation>
    <scope>FUNCTION</scope>
    <scope>DEVELOPMENTAL STAGE</scope>
</reference>